<sequence>MQYKYLLEYNKKNHECNPCHVAIIMDGNGRWATRQGKIRIMGHKEGFRAVKEAIKFSIANNLKILTLYAFSSENWNRPLFEIKALMELFLFALDTEIKNLKKHNIRFKVIGDITCFDKKLQNSIHYAEQITFDNTGLILNIAANYGGRWDIIESVKKIINRVQRGILDVNKIHENTISQYLSTSELLPVDLVIRTGGEKRISNFLLWQIAYSELYFTDVLWPDFNCHIFQHAIDSFVSRERRFGGFKKNKK</sequence>
<gene>
    <name evidence="1" type="primary">uppS</name>
    <name type="ordered locus">BU236</name>
</gene>
<organism>
    <name type="scientific">Buchnera aphidicola subsp. Acyrthosiphon pisum (strain APS)</name>
    <name type="common">Acyrthosiphon pisum symbiotic bacterium</name>
    <dbReference type="NCBI Taxonomy" id="107806"/>
    <lineage>
        <taxon>Bacteria</taxon>
        <taxon>Pseudomonadati</taxon>
        <taxon>Pseudomonadota</taxon>
        <taxon>Gammaproteobacteria</taxon>
        <taxon>Enterobacterales</taxon>
        <taxon>Erwiniaceae</taxon>
        <taxon>Buchnera</taxon>
    </lineage>
</organism>
<keyword id="KW-0133">Cell shape</keyword>
<keyword id="KW-0961">Cell wall biogenesis/degradation</keyword>
<keyword id="KW-0460">Magnesium</keyword>
<keyword id="KW-0479">Metal-binding</keyword>
<keyword id="KW-0573">Peptidoglycan synthesis</keyword>
<keyword id="KW-1185">Reference proteome</keyword>
<keyword id="KW-0808">Transferase</keyword>
<dbReference type="EC" id="2.5.1.31" evidence="1"/>
<dbReference type="EMBL" id="BA000003">
    <property type="protein sequence ID" value="BAB12951.1"/>
    <property type="molecule type" value="Genomic_DNA"/>
</dbReference>
<dbReference type="RefSeq" id="NP_240065.1">
    <property type="nucleotide sequence ID" value="NC_002528.1"/>
</dbReference>
<dbReference type="RefSeq" id="WP_010896019.1">
    <property type="nucleotide sequence ID" value="NC_002528.1"/>
</dbReference>
<dbReference type="SMR" id="P57330"/>
<dbReference type="STRING" id="563178.BUAP5A_231"/>
<dbReference type="EnsemblBacteria" id="BAB12951">
    <property type="protein sequence ID" value="BAB12951"/>
    <property type="gene ID" value="BAB12951"/>
</dbReference>
<dbReference type="KEGG" id="buc:BU236"/>
<dbReference type="PATRIC" id="fig|107806.10.peg.249"/>
<dbReference type="eggNOG" id="COG0020">
    <property type="taxonomic scope" value="Bacteria"/>
</dbReference>
<dbReference type="HOGENOM" id="CLU_038505_1_1_6"/>
<dbReference type="Proteomes" id="UP000001806">
    <property type="component" value="Chromosome"/>
</dbReference>
<dbReference type="GO" id="GO:0005829">
    <property type="term" value="C:cytosol"/>
    <property type="evidence" value="ECO:0007669"/>
    <property type="project" value="TreeGrafter"/>
</dbReference>
<dbReference type="GO" id="GO:0008834">
    <property type="term" value="F:ditrans,polycis-undecaprenyl-diphosphate synthase [(2E,6E)-farnesyl-diphosphate specific] activity"/>
    <property type="evidence" value="ECO:0007669"/>
    <property type="project" value="UniProtKB-UniRule"/>
</dbReference>
<dbReference type="GO" id="GO:0000287">
    <property type="term" value="F:magnesium ion binding"/>
    <property type="evidence" value="ECO:0007669"/>
    <property type="project" value="UniProtKB-UniRule"/>
</dbReference>
<dbReference type="GO" id="GO:0071555">
    <property type="term" value="P:cell wall organization"/>
    <property type="evidence" value="ECO:0007669"/>
    <property type="project" value="UniProtKB-KW"/>
</dbReference>
<dbReference type="GO" id="GO:0009252">
    <property type="term" value="P:peptidoglycan biosynthetic process"/>
    <property type="evidence" value="ECO:0007669"/>
    <property type="project" value="UniProtKB-UniRule"/>
</dbReference>
<dbReference type="GO" id="GO:0016094">
    <property type="term" value="P:polyprenol biosynthetic process"/>
    <property type="evidence" value="ECO:0007669"/>
    <property type="project" value="TreeGrafter"/>
</dbReference>
<dbReference type="GO" id="GO:0008360">
    <property type="term" value="P:regulation of cell shape"/>
    <property type="evidence" value="ECO:0007669"/>
    <property type="project" value="UniProtKB-KW"/>
</dbReference>
<dbReference type="CDD" id="cd00475">
    <property type="entry name" value="Cis_IPPS"/>
    <property type="match status" value="1"/>
</dbReference>
<dbReference type="FunFam" id="3.40.1180.10:FF:000001">
    <property type="entry name" value="(2E,6E)-farnesyl-diphosphate-specific ditrans,polycis-undecaprenyl-diphosphate synthase"/>
    <property type="match status" value="1"/>
</dbReference>
<dbReference type="Gene3D" id="3.40.1180.10">
    <property type="entry name" value="Decaprenyl diphosphate synthase-like"/>
    <property type="match status" value="1"/>
</dbReference>
<dbReference type="HAMAP" id="MF_01139">
    <property type="entry name" value="ISPT"/>
    <property type="match status" value="1"/>
</dbReference>
<dbReference type="InterPro" id="IPR001441">
    <property type="entry name" value="UPP_synth-like"/>
</dbReference>
<dbReference type="InterPro" id="IPR018520">
    <property type="entry name" value="UPP_synth-like_CS"/>
</dbReference>
<dbReference type="InterPro" id="IPR036424">
    <property type="entry name" value="UPP_synth-like_sf"/>
</dbReference>
<dbReference type="NCBIfam" id="TIGR00055">
    <property type="entry name" value="uppS"/>
    <property type="match status" value="1"/>
</dbReference>
<dbReference type="PANTHER" id="PTHR10291:SF0">
    <property type="entry name" value="DEHYDRODOLICHYL DIPHOSPHATE SYNTHASE 2"/>
    <property type="match status" value="1"/>
</dbReference>
<dbReference type="PANTHER" id="PTHR10291">
    <property type="entry name" value="DEHYDRODOLICHYL DIPHOSPHATE SYNTHASE FAMILY MEMBER"/>
    <property type="match status" value="1"/>
</dbReference>
<dbReference type="Pfam" id="PF01255">
    <property type="entry name" value="Prenyltransf"/>
    <property type="match status" value="1"/>
</dbReference>
<dbReference type="SUPFAM" id="SSF64005">
    <property type="entry name" value="Undecaprenyl diphosphate synthase"/>
    <property type="match status" value="1"/>
</dbReference>
<dbReference type="PROSITE" id="PS01066">
    <property type="entry name" value="UPP_SYNTHASE"/>
    <property type="match status" value="1"/>
</dbReference>
<accession>P57330</accession>
<feature type="chain" id="PRO_0000123584" description="Ditrans,polycis-undecaprenyl-diphosphate synthase ((2E,6E)-farnesyl-diphosphate specific)">
    <location>
        <begin position="1"/>
        <end position="251"/>
    </location>
</feature>
<feature type="active site" evidence="1">
    <location>
        <position position="26"/>
    </location>
</feature>
<feature type="active site" description="Proton acceptor" evidence="1">
    <location>
        <position position="74"/>
    </location>
</feature>
<feature type="binding site" evidence="1">
    <location>
        <position position="26"/>
    </location>
    <ligand>
        <name>Mg(2+)</name>
        <dbReference type="ChEBI" id="CHEBI:18420"/>
    </ligand>
</feature>
<feature type="binding site" evidence="1">
    <location>
        <begin position="27"/>
        <end position="30"/>
    </location>
    <ligand>
        <name>substrate</name>
    </ligand>
</feature>
<feature type="binding site" evidence="1">
    <location>
        <position position="31"/>
    </location>
    <ligand>
        <name>substrate</name>
    </ligand>
</feature>
<feature type="binding site" evidence="1">
    <location>
        <position position="39"/>
    </location>
    <ligand>
        <name>substrate</name>
    </ligand>
</feature>
<feature type="binding site" evidence="1">
    <location>
        <position position="43"/>
    </location>
    <ligand>
        <name>substrate</name>
    </ligand>
</feature>
<feature type="binding site" evidence="1">
    <location>
        <begin position="71"/>
        <end position="73"/>
    </location>
    <ligand>
        <name>substrate</name>
    </ligand>
</feature>
<feature type="binding site" evidence="1">
    <location>
        <position position="75"/>
    </location>
    <ligand>
        <name>substrate</name>
    </ligand>
</feature>
<feature type="binding site" evidence="1">
    <location>
        <position position="77"/>
    </location>
    <ligand>
        <name>substrate</name>
    </ligand>
</feature>
<feature type="binding site" evidence="1">
    <location>
        <position position="194"/>
    </location>
    <ligand>
        <name>substrate</name>
    </ligand>
</feature>
<feature type="binding site" evidence="1">
    <location>
        <begin position="200"/>
        <end position="202"/>
    </location>
    <ligand>
        <name>substrate</name>
    </ligand>
</feature>
<feature type="binding site" evidence="1">
    <location>
        <position position="213"/>
    </location>
    <ligand>
        <name>Mg(2+)</name>
        <dbReference type="ChEBI" id="CHEBI:18420"/>
    </ligand>
</feature>
<comment type="function">
    <text evidence="1">Catalyzes the sequential condensation of isopentenyl diphosphate (IPP) with (2E,6E)-farnesyl diphosphate (E,E-FPP) to yield (2Z,6Z,10Z,14Z,18Z,22Z,26Z,30Z,34E,38E)-undecaprenyl diphosphate (di-trans,octa-cis-UPP). UPP is the precursor of glycosyl carrier lipid in the biosynthesis of bacterial cell wall polysaccharide components such as peptidoglycan and lipopolysaccharide.</text>
</comment>
<comment type="catalytic activity">
    <reaction evidence="1">
        <text>8 isopentenyl diphosphate + (2E,6E)-farnesyl diphosphate = di-trans,octa-cis-undecaprenyl diphosphate + 8 diphosphate</text>
        <dbReference type="Rhea" id="RHEA:27551"/>
        <dbReference type="ChEBI" id="CHEBI:33019"/>
        <dbReference type="ChEBI" id="CHEBI:58405"/>
        <dbReference type="ChEBI" id="CHEBI:128769"/>
        <dbReference type="ChEBI" id="CHEBI:175763"/>
        <dbReference type="EC" id="2.5.1.31"/>
    </reaction>
</comment>
<comment type="cofactor">
    <cofactor evidence="1">
        <name>Mg(2+)</name>
        <dbReference type="ChEBI" id="CHEBI:18420"/>
    </cofactor>
    <text evidence="1">Binds 2 magnesium ions per subunit.</text>
</comment>
<comment type="subunit">
    <text evidence="1">Homodimer.</text>
</comment>
<comment type="similarity">
    <text evidence="1">Belongs to the UPP synthase family.</text>
</comment>
<evidence type="ECO:0000255" key="1">
    <source>
        <dbReference type="HAMAP-Rule" id="MF_01139"/>
    </source>
</evidence>
<proteinExistence type="inferred from homology"/>
<name>UPPS_BUCAI</name>
<protein>
    <recommendedName>
        <fullName evidence="1">Ditrans,polycis-undecaprenyl-diphosphate synthase ((2E,6E)-farnesyl-diphosphate specific)</fullName>
        <ecNumber evidence="1">2.5.1.31</ecNumber>
    </recommendedName>
    <alternativeName>
        <fullName evidence="1">Ditrans,polycis-undecaprenylcistransferase</fullName>
    </alternativeName>
    <alternativeName>
        <fullName evidence="1">Undecaprenyl diphosphate synthase</fullName>
        <shortName evidence="1">UDS</shortName>
    </alternativeName>
    <alternativeName>
        <fullName evidence="1">Undecaprenyl pyrophosphate synthase</fullName>
        <shortName evidence="1">UPP synthase</shortName>
    </alternativeName>
</protein>
<reference key="1">
    <citation type="journal article" date="2000" name="Nature">
        <title>Genome sequence of the endocellular bacterial symbiont of aphids Buchnera sp. APS.</title>
        <authorList>
            <person name="Shigenobu S."/>
            <person name="Watanabe H."/>
            <person name="Hattori M."/>
            <person name="Sakaki Y."/>
            <person name="Ishikawa H."/>
        </authorList>
    </citation>
    <scope>NUCLEOTIDE SEQUENCE [LARGE SCALE GENOMIC DNA]</scope>
    <source>
        <strain>APS</strain>
    </source>
</reference>